<gene>
    <name type="primary">LYZ</name>
    <name type="synonym">LZM</name>
</gene>
<evidence type="ECO:0000255" key="1">
    <source>
        <dbReference type="PROSITE-ProRule" id="PRU00680"/>
    </source>
</evidence>
<evidence type="ECO:0000269" key="2">
    <source>
    </source>
</evidence>
<proteinExistence type="evidence at protein level"/>
<organism>
    <name type="scientific">Semnopithecus entellus</name>
    <name type="common">Northern plains gray langur</name>
    <name type="synonym">Presbytis entellus</name>
    <dbReference type="NCBI Taxonomy" id="88029"/>
    <lineage>
        <taxon>Eukaryota</taxon>
        <taxon>Metazoa</taxon>
        <taxon>Chordata</taxon>
        <taxon>Craniata</taxon>
        <taxon>Vertebrata</taxon>
        <taxon>Euteleostomi</taxon>
        <taxon>Mammalia</taxon>
        <taxon>Eutheria</taxon>
        <taxon>Euarchontoglires</taxon>
        <taxon>Primates</taxon>
        <taxon>Haplorrhini</taxon>
        <taxon>Catarrhini</taxon>
        <taxon>Cercopithecidae</taxon>
        <taxon>Colobinae</taxon>
        <taxon>Semnopithecus</taxon>
    </lineage>
</organism>
<accession>P67977</accession>
<accession>P07232</accession>
<sequence>MKALTILGLVLLSVTVQGKIFERCELARTLKKLGLDGYKGVSLANWVCLAKWESGYNTEATNYNPGDESTDYGIFQINSRYWCNNGKTPGAVDACHISCSALLQNNIADAVACAKRVVSDPQGIRAWVAWRNHCQNKDVSQYVKGCGV</sequence>
<feature type="signal peptide" evidence="2">
    <location>
        <begin position="1"/>
        <end position="18"/>
    </location>
</feature>
<feature type="chain" id="PRO_0000018482" description="Lysozyme C">
    <location>
        <begin position="19"/>
        <end position="148"/>
    </location>
</feature>
<feature type="domain" description="C-type lysozyme" evidence="1">
    <location>
        <begin position="19"/>
        <end position="148"/>
    </location>
</feature>
<feature type="active site" evidence="1">
    <location>
        <position position="53"/>
    </location>
</feature>
<feature type="active site" evidence="1">
    <location>
        <position position="71"/>
    </location>
</feature>
<feature type="disulfide bond" evidence="1">
    <location>
        <begin position="24"/>
        <end position="146"/>
    </location>
</feature>
<feature type="disulfide bond" evidence="1">
    <location>
        <begin position="48"/>
        <end position="134"/>
    </location>
</feature>
<feature type="disulfide bond" evidence="1">
    <location>
        <begin position="83"/>
        <end position="99"/>
    </location>
</feature>
<feature type="disulfide bond" evidence="1">
    <location>
        <begin position="95"/>
        <end position="113"/>
    </location>
</feature>
<keyword id="KW-0929">Antimicrobial</keyword>
<keyword id="KW-0081">Bacteriolytic enzyme</keyword>
<keyword id="KW-0222">Digestion</keyword>
<keyword id="KW-0903">Direct protein sequencing</keyword>
<keyword id="KW-1015">Disulfide bond</keyword>
<keyword id="KW-0326">Glycosidase</keyword>
<keyword id="KW-0378">Hydrolase</keyword>
<keyword id="KW-0964">Secreted</keyword>
<keyword id="KW-0732">Signal</keyword>
<reference key="1">
    <citation type="journal article" date="1991" name="J. Mol. Evol.">
        <title>Stomach lysozyme gene of the langur monkey: tests for convergence and positive selection.</title>
        <authorList>
            <person name="Swanson K.W."/>
            <person name="Irwin D.M."/>
            <person name="Wilson A.C."/>
        </authorList>
    </citation>
    <scope>NUCLEOTIDE SEQUENCE [GENOMIC DNA / MRNA]</scope>
    <source>
        <tissue>Stomach</tissue>
    </source>
</reference>
<reference key="2">
    <citation type="journal article" date="1987" name="Nature">
        <title>Adaptive evolution in the stomach lysozymes of foregut fermenters.</title>
        <authorList>
            <person name="Stewart C.-B."/>
            <person name="Schilling J.W."/>
            <person name="Wilson A.C."/>
        </authorList>
    </citation>
    <scope>PROTEIN SEQUENCE OF 19-148</scope>
</reference>
<protein>
    <recommendedName>
        <fullName>Lysozyme C</fullName>
        <ecNumber>3.2.1.17</ecNumber>
    </recommendedName>
    <alternativeName>
        <fullName>1,4-beta-N-acetylmuramidase C</fullName>
    </alternativeName>
</protein>
<dbReference type="EC" id="3.2.1.17"/>
<dbReference type="EMBL" id="X60235">
    <property type="protein sequence ID" value="CAA42795.1"/>
    <property type="molecule type" value="mRNA"/>
</dbReference>
<dbReference type="EMBL" id="X60234">
    <property type="protein sequence ID" value="CAA42794.1"/>
    <property type="molecule type" value="Genomic_DNA"/>
</dbReference>
<dbReference type="PIR" id="I61852">
    <property type="entry name" value="I61852"/>
</dbReference>
<dbReference type="SMR" id="P67977"/>
<dbReference type="CAZy" id="GH22">
    <property type="family name" value="Glycoside Hydrolase Family 22"/>
</dbReference>
<dbReference type="GO" id="GO:0005576">
    <property type="term" value="C:extracellular region"/>
    <property type="evidence" value="ECO:0007669"/>
    <property type="project" value="UniProtKB-SubCell"/>
</dbReference>
<dbReference type="GO" id="GO:0003796">
    <property type="term" value="F:lysozyme activity"/>
    <property type="evidence" value="ECO:0007669"/>
    <property type="project" value="UniProtKB-EC"/>
</dbReference>
<dbReference type="GO" id="GO:0050829">
    <property type="term" value="P:defense response to Gram-negative bacterium"/>
    <property type="evidence" value="ECO:0007669"/>
    <property type="project" value="TreeGrafter"/>
</dbReference>
<dbReference type="GO" id="GO:0050830">
    <property type="term" value="P:defense response to Gram-positive bacterium"/>
    <property type="evidence" value="ECO:0007669"/>
    <property type="project" value="TreeGrafter"/>
</dbReference>
<dbReference type="GO" id="GO:0007586">
    <property type="term" value="P:digestion"/>
    <property type="evidence" value="ECO:0007669"/>
    <property type="project" value="UniProtKB-KW"/>
</dbReference>
<dbReference type="GO" id="GO:0031640">
    <property type="term" value="P:killing of cells of another organism"/>
    <property type="evidence" value="ECO:0007669"/>
    <property type="project" value="UniProtKB-KW"/>
</dbReference>
<dbReference type="CDD" id="cd16897">
    <property type="entry name" value="LYZ_C"/>
    <property type="match status" value="1"/>
</dbReference>
<dbReference type="FunFam" id="1.10.530.10:FF:000001">
    <property type="entry name" value="Lysozyme C"/>
    <property type="match status" value="1"/>
</dbReference>
<dbReference type="Gene3D" id="1.10.530.10">
    <property type="match status" value="1"/>
</dbReference>
<dbReference type="InterPro" id="IPR001916">
    <property type="entry name" value="Glyco_hydro_22"/>
</dbReference>
<dbReference type="InterPro" id="IPR019799">
    <property type="entry name" value="Glyco_hydro_22_CS"/>
</dbReference>
<dbReference type="InterPro" id="IPR000974">
    <property type="entry name" value="Glyco_hydro_22_lys"/>
</dbReference>
<dbReference type="InterPro" id="IPR023346">
    <property type="entry name" value="Lysozyme-like_dom_sf"/>
</dbReference>
<dbReference type="PANTHER" id="PTHR11407">
    <property type="entry name" value="LYSOZYME C"/>
    <property type="match status" value="1"/>
</dbReference>
<dbReference type="PANTHER" id="PTHR11407:SF28">
    <property type="entry name" value="LYSOZYME C"/>
    <property type="match status" value="1"/>
</dbReference>
<dbReference type="Pfam" id="PF00062">
    <property type="entry name" value="Lys"/>
    <property type="match status" value="1"/>
</dbReference>
<dbReference type="PRINTS" id="PR00137">
    <property type="entry name" value="LYSOZYME"/>
</dbReference>
<dbReference type="PRINTS" id="PR00135">
    <property type="entry name" value="LYZLACT"/>
</dbReference>
<dbReference type="SMART" id="SM00263">
    <property type="entry name" value="LYZ1"/>
    <property type="match status" value="1"/>
</dbReference>
<dbReference type="SUPFAM" id="SSF53955">
    <property type="entry name" value="Lysozyme-like"/>
    <property type="match status" value="1"/>
</dbReference>
<dbReference type="PROSITE" id="PS00128">
    <property type="entry name" value="GLYCOSYL_HYDROL_F22_1"/>
    <property type="match status" value="1"/>
</dbReference>
<dbReference type="PROSITE" id="PS51348">
    <property type="entry name" value="GLYCOSYL_HYDROL_F22_2"/>
    <property type="match status" value="1"/>
</dbReference>
<comment type="function">
    <text>Lysozymes have primarily a bacteriolytic function; those in tissues and body fluids are associated with the monocyte-macrophage system and enhance the activity of immunoagents. Also plays a role in digestion in this species.</text>
</comment>
<comment type="catalytic activity">
    <reaction>
        <text>Hydrolysis of (1-&gt;4)-beta-linkages between N-acetylmuramic acid and N-acetyl-D-glucosamine residues in a peptidoglycan and between N-acetyl-D-glucosamine residues in chitodextrins.</text>
        <dbReference type="EC" id="3.2.1.17"/>
    </reaction>
</comment>
<comment type="subunit">
    <text>Monomer.</text>
</comment>
<comment type="subcellular location">
    <subcellularLocation>
        <location>Secreted</location>
    </subcellularLocation>
</comment>
<comment type="miscellaneous">
    <text>Lysozyme C is capable of both hydrolysis and transglycosylation; it also shows a slight esterase activity. It acts rapidly on both peptide-substituted and unsubstituted peptidoglycan, and slowly on chitin oligosaccharides.</text>
</comment>
<comment type="similarity">
    <text evidence="1">Belongs to the glycosyl hydrolase 22 family.</text>
</comment>
<name>LYSC_SEMEN</name>